<keyword id="KW-0067">ATP-binding</keyword>
<keyword id="KW-0997">Cell inner membrane</keyword>
<keyword id="KW-1003">Cell membrane</keyword>
<keyword id="KW-0418">Kinase</keyword>
<keyword id="KW-0448">Lipopolysaccharide biosynthesis</keyword>
<keyword id="KW-0472">Membrane</keyword>
<keyword id="KW-0547">Nucleotide-binding</keyword>
<keyword id="KW-1185">Reference proteome</keyword>
<keyword id="KW-0808">Transferase</keyword>
<proteinExistence type="inferred from homology"/>
<accession>Q6LVM6</accession>
<sequence length="236" mass="27063">MEELCFDNQRIWFDPNLLQEDPKACFDASFWQQQGKVIGSAQGRGTTWFVQGETLPMALRHYRRGGLFGKLIEDAYVFTGWEKTRCAEEVALLSTLAVGGVNVPRPVAARATRHGLVYRADLLVEKIDSAKDLVDLLQQAMLPDHVWYAIGRTVRKMHDLQVCHTDLNAHNILVDSRELVWLIDFDKCYTQEGEAWKAKNLSRLHRSFVKEQGKRNIHFSATSWQVLCQGYELPDN</sequence>
<gene>
    <name evidence="1" type="primary">kdkA</name>
    <name type="ordered locus">PBPRA0210</name>
</gene>
<evidence type="ECO:0000255" key="1">
    <source>
        <dbReference type="HAMAP-Rule" id="MF_00521"/>
    </source>
</evidence>
<feature type="chain" id="PRO_0000263414" description="3-deoxy-D-manno-octulosonic acid kinase">
    <location>
        <begin position="1"/>
        <end position="236"/>
    </location>
</feature>
<feature type="active site" evidence="1">
    <location>
        <position position="166"/>
    </location>
</feature>
<protein>
    <recommendedName>
        <fullName evidence="1">3-deoxy-D-manno-octulosonic acid kinase</fullName>
        <shortName evidence="1">Kdo kinase</shortName>
        <ecNumber evidence="1">2.7.1.166</ecNumber>
    </recommendedName>
</protein>
<comment type="function">
    <text evidence="1">Catalyzes the ATP-dependent phosphorylation of the 3-deoxy-D-manno-octulosonic acid (Kdo) residue in Kdo-lipid IV(A) at the 4-OH position.</text>
</comment>
<comment type="catalytic activity">
    <reaction evidence="1">
        <text>an alpha-Kdo-(2-&gt;6)-lipid IVA + ATP = a 4-O-phospho-alpha-Kdo-(2-&gt;6)-lipid IVA + ADP + H(+)</text>
        <dbReference type="Rhea" id="RHEA:74271"/>
        <dbReference type="ChEBI" id="CHEBI:15378"/>
        <dbReference type="ChEBI" id="CHEBI:30616"/>
        <dbReference type="ChEBI" id="CHEBI:176428"/>
        <dbReference type="ChEBI" id="CHEBI:193140"/>
        <dbReference type="ChEBI" id="CHEBI:456216"/>
        <dbReference type="EC" id="2.7.1.166"/>
    </reaction>
</comment>
<comment type="pathway">
    <text evidence="1">Bacterial outer membrane biogenesis; LPS core biosynthesis.</text>
</comment>
<comment type="subcellular location">
    <subcellularLocation>
        <location evidence="1">Cell inner membrane</location>
        <topology evidence="1">Peripheral membrane protein</topology>
        <orientation evidence="1">Cytoplasmic side</orientation>
    </subcellularLocation>
</comment>
<comment type="similarity">
    <text evidence="1">Belongs to the protein kinase superfamily. KdkA/RfaP family.</text>
</comment>
<organism>
    <name type="scientific">Photobacterium profundum (strain SS9)</name>
    <dbReference type="NCBI Taxonomy" id="298386"/>
    <lineage>
        <taxon>Bacteria</taxon>
        <taxon>Pseudomonadati</taxon>
        <taxon>Pseudomonadota</taxon>
        <taxon>Gammaproteobacteria</taxon>
        <taxon>Vibrionales</taxon>
        <taxon>Vibrionaceae</taxon>
        <taxon>Photobacterium</taxon>
    </lineage>
</organism>
<name>KDKA_PHOPR</name>
<reference key="1">
    <citation type="journal article" date="2005" name="Science">
        <title>Life at depth: Photobacterium profundum genome sequence and expression analysis.</title>
        <authorList>
            <person name="Vezzi A."/>
            <person name="Campanaro S."/>
            <person name="D'Angelo M."/>
            <person name="Simonato F."/>
            <person name="Vitulo N."/>
            <person name="Lauro F.M."/>
            <person name="Cestaro A."/>
            <person name="Malacrida G."/>
            <person name="Simionati B."/>
            <person name="Cannata N."/>
            <person name="Romualdi C."/>
            <person name="Bartlett D.H."/>
            <person name="Valle G."/>
        </authorList>
    </citation>
    <scope>NUCLEOTIDE SEQUENCE [LARGE SCALE GENOMIC DNA]</scope>
    <source>
        <strain>ATCC BAA-1253 / SS9</strain>
    </source>
</reference>
<dbReference type="EC" id="2.7.1.166" evidence="1"/>
<dbReference type="EMBL" id="CR378663">
    <property type="protein sequence ID" value="CAG18649.1"/>
    <property type="molecule type" value="Genomic_DNA"/>
</dbReference>
<dbReference type="RefSeq" id="WP_011217025.1">
    <property type="nucleotide sequence ID" value="NC_006370.1"/>
</dbReference>
<dbReference type="STRING" id="298386.PBPRA0210"/>
<dbReference type="KEGG" id="ppr:PBPRA0210"/>
<dbReference type="eggNOG" id="COG3642">
    <property type="taxonomic scope" value="Bacteria"/>
</dbReference>
<dbReference type="HOGENOM" id="CLU_094226_0_0_6"/>
<dbReference type="UniPathway" id="UPA00958"/>
<dbReference type="Proteomes" id="UP000000593">
    <property type="component" value="Chromosome 1"/>
</dbReference>
<dbReference type="GO" id="GO:0005886">
    <property type="term" value="C:plasma membrane"/>
    <property type="evidence" value="ECO:0007669"/>
    <property type="project" value="UniProtKB-SubCell"/>
</dbReference>
<dbReference type="GO" id="GO:0005524">
    <property type="term" value="F:ATP binding"/>
    <property type="evidence" value="ECO:0007669"/>
    <property type="project" value="UniProtKB-UniRule"/>
</dbReference>
<dbReference type="GO" id="GO:0016301">
    <property type="term" value="F:kinase activity"/>
    <property type="evidence" value="ECO:0007669"/>
    <property type="project" value="UniProtKB-KW"/>
</dbReference>
<dbReference type="GO" id="GO:0016773">
    <property type="term" value="F:phosphotransferase activity, alcohol group as acceptor"/>
    <property type="evidence" value="ECO:0007669"/>
    <property type="project" value="UniProtKB-UniRule"/>
</dbReference>
<dbReference type="GO" id="GO:0009244">
    <property type="term" value="P:lipopolysaccharide core region biosynthetic process"/>
    <property type="evidence" value="ECO:0007669"/>
    <property type="project" value="UniProtKB-UniRule"/>
</dbReference>
<dbReference type="Gene3D" id="1.10.510.10">
    <property type="entry name" value="Transferase(Phosphotransferase) domain 1"/>
    <property type="match status" value="1"/>
</dbReference>
<dbReference type="HAMAP" id="MF_00521">
    <property type="entry name" value="KDO_kinase"/>
    <property type="match status" value="1"/>
</dbReference>
<dbReference type="InterPro" id="IPR022826">
    <property type="entry name" value="KDO_kinase"/>
</dbReference>
<dbReference type="InterPro" id="IPR011009">
    <property type="entry name" value="Kinase-like_dom_sf"/>
</dbReference>
<dbReference type="NCBIfam" id="NF002475">
    <property type="entry name" value="PRK01723.1"/>
    <property type="match status" value="1"/>
</dbReference>
<dbReference type="Pfam" id="PF06293">
    <property type="entry name" value="Kdo"/>
    <property type="match status" value="1"/>
</dbReference>
<dbReference type="SUPFAM" id="SSF56112">
    <property type="entry name" value="Protein kinase-like (PK-like)"/>
    <property type="match status" value="1"/>
</dbReference>